<name>GET2_PICST</name>
<dbReference type="EMBL" id="CP000496">
    <property type="protein sequence ID" value="ABN65094.2"/>
    <property type="molecule type" value="Genomic_DNA"/>
</dbReference>
<dbReference type="RefSeq" id="XP_001383123.2">
    <property type="nucleotide sequence ID" value="XM_001383086.1"/>
</dbReference>
<dbReference type="SMR" id="A3LPS6"/>
<dbReference type="FunCoup" id="A3LPS6">
    <property type="interactions" value="69"/>
</dbReference>
<dbReference type="STRING" id="322104.A3LPS6"/>
<dbReference type="GeneID" id="4837130"/>
<dbReference type="KEGG" id="pic:PICST_81524"/>
<dbReference type="eggNOG" id="ENOG502QW0H">
    <property type="taxonomic scope" value="Eukaryota"/>
</dbReference>
<dbReference type="HOGENOM" id="CLU_066477_0_0_1"/>
<dbReference type="InParanoid" id="A3LPS6"/>
<dbReference type="OMA" id="QYWDVLS"/>
<dbReference type="OrthoDB" id="4097053at2759"/>
<dbReference type="Proteomes" id="UP000002258">
    <property type="component" value="Chromosome 2"/>
</dbReference>
<dbReference type="GO" id="GO:0005789">
    <property type="term" value="C:endoplasmic reticulum membrane"/>
    <property type="evidence" value="ECO:0007669"/>
    <property type="project" value="UniProtKB-SubCell"/>
</dbReference>
<dbReference type="GO" id="GO:0043529">
    <property type="term" value="C:GET complex"/>
    <property type="evidence" value="ECO:0007669"/>
    <property type="project" value="UniProtKB-UniRule"/>
</dbReference>
<dbReference type="GO" id="GO:0000139">
    <property type="term" value="C:Golgi membrane"/>
    <property type="evidence" value="ECO:0007669"/>
    <property type="project" value="UniProtKB-SubCell"/>
</dbReference>
<dbReference type="GO" id="GO:0045048">
    <property type="term" value="P:protein insertion into ER membrane"/>
    <property type="evidence" value="ECO:0007669"/>
    <property type="project" value="UniProtKB-UniRule"/>
</dbReference>
<dbReference type="GO" id="GO:0006890">
    <property type="term" value="P:retrograde vesicle-mediated transport, Golgi to endoplasmic reticulum"/>
    <property type="evidence" value="ECO:0007669"/>
    <property type="project" value="TreeGrafter"/>
</dbReference>
<dbReference type="HAMAP" id="MF_03114">
    <property type="entry name" value="Get2"/>
    <property type="match status" value="1"/>
</dbReference>
<dbReference type="InterPro" id="IPR014802">
    <property type="entry name" value="GET2"/>
</dbReference>
<dbReference type="InterPro" id="IPR028143">
    <property type="entry name" value="Get2/sif1"/>
</dbReference>
<dbReference type="PANTHER" id="PTHR28263">
    <property type="entry name" value="GOLGI TO ER TRAFFIC PROTEIN 2"/>
    <property type="match status" value="1"/>
</dbReference>
<dbReference type="PANTHER" id="PTHR28263:SF1">
    <property type="entry name" value="GOLGI TO ER TRAFFIC PROTEIN 2"/>
    <property type="match status" value="1"/>
</dbReference>
<dbReference type="Pfam" id="PF08690">
    <property type="entry name" value="GET2"/>
    <property type="match status" value="1"/>
</dbReference>
<proteinExistence type="inferred from homology"/>
<organism>
    <name type="scientific">Scheffersomyces stipitis (strain ATCC 58785 / CBS 6054 / NBRC 10063 / NRRL Y-11545)</name>
    <name type="common">Yeast</name>
    <name type="synonym">Pichia stipitis</name>
    <dbReference type="NCBI Taxonomy" id="322104"/>
    <lineage>
        <taxon>Eukaryota</taxon>
        <taxon>Fungi</taxon>
        <taxon>Dikarya</taxon>
        <taxon>Ascomycota</taxon>
        <taxon>Saccharomycotina</taxon>
        <taxon>Pichiomycetes</taxon>
        <taxon>Debaryomycetaceae</taxon>
        <taxon>Scheffersomyces</taxon>
    </lineage>
</organism>
<keyword id="KW-0256">Endoplasmic reticulum</keyword>
<keyword id="KW-0931">ER-Golgi transport</keyword>
<keyword id="KW-0333">Golgi apparatus</keyword>
<keyword id="KW-0472">Membrane</keyword>
<keyword id="KW-1185">Reference proteome</keyword>
<keyword id="KW-0812">Transmembrane</keyword>
<keyword id="KW-1133">Transmembrane helix</keyword>
<keyword id="KW-0813">Transport</keyword>
<comment type="function">
    <text evidence="1">Required for the post-translational delivery of tail-anchored (TA) proteins to the endoplasmic reticulum. Together with GET1, acts as a membrane receptor for soluble GET3, which recognizes and selectively binds the transmembrane domain of TA proteins in the cytosol. The GET complex cooperates with the HDEL receptor ERD2 to mediate the ATP-dependent retrieval of resident ER proteins that contain a C-terminal H-D-E-L retention signal from the Golgi to the ER.</text>
</comment>
<comment type="subunit">
    <text evidence="1">Component of the Golgi to ER traffic (GET) complex, which is composed of GET1, GET2 and GET3. Within the complex, GET1 and GET2 form a heterotetramer which is stabilized by phosphatidylinositol binding and which binds to the GET3 homodimer.</text>
</comment>
<comment type="subcellular location">
    <subcellularLocation>
        <location evidence="1">Endoplasmic reticulum membrane</location>
        <topology evidence="1">Multi-pass membrane protein</topology>
    </subcellularLocation>
    <subcellularLocation>
        <location evidence="1">Golgi apparatus membrane</location>
        <topology evidence="1">Multi-pass membrane protein</topology>
    </subcellularLocation>
</comment>
<comment type="similarity">
    <text evidence="1">Belongs to the GET2 family.</text>
</comment>
<gene>
    <name evidence="1" type="primary">GET2</name>
    <name type="ORF">PICST_81524</name>
</gene>
<feature type="chain" id="PRO_0000388637" description="Golgi to ER traffic protein 2">
    <location>
        <begin position="1"/>
        <end position="312"/>
    </location>
</feature>
<feature type="topological domain" description="Cytoplasmic" evidence="1">
    <location>
        <begin position="1"/>
        <end position="175"/>
    </location>
</feature>
<feature type="transmembrane region" description="Helical" evidence="1">
    <location>
        <begin position="176"/>
        <end position="196"/>
    </location>
</feature>
<feature type="topological domain" description="Lumenal" evidence="1">
    <location>
        <begin position="197"/>
        <end position="224"/>
    </location>
</feature>
<feature type="transmembrane region" description="Helical" evidence="1">
    <location>
        <begin position="225"/>
        <end position="244"/>
    </location>
</feature>
<feature type="topological domain" description="Cytoplasmic" evidence="1">
    <location>
        <begin position="245"/>
        <end position="288"/>
    </location>
</feature>
<feature type="transmembrane region" description="Helical" evidence="1">
    <location>
        <begin position="289"/>
        <end position="309"/>
    </location>
</feature>
<feature type="topological domain" description="Lumenal" evidence="1">
    <location>
        <begin position="310"/>
        <end position="312"/>
    </location>
</feature>
<evidence type="ECO:0000255" key="1">
    <source>
        <dbReference type="HAMAP-Rule" id="MF_03114"/>
    </source>
</evidence>
<sequence>MSDSPSISAEERKRILRERRAAKMAKGNATSRLNTILTQGNSVKDVSSVKSVLDQEPTGATATTTGNHDLDPDHHDIEGFINTPGINASNDSVALSNSEDIDEMFKKIFGGQVPGNGTDGAGSEDPLAQMMKMFSQPGAGTGTNTPFSEDPFSAQPEEFKYQQQLVQYNTYRHQVWKFRFLAVRYFALLANFIYHFYIIGDSISFASSSHQFIRELIPVEPARSFFTLFSTIEVVIIASYYFLGTKEGFFSTATSNNFVVKLLDMGSMVLPQLQQFKTIAVRLLGYYELLAVLLGDLSLVVVLFGLHSVLGN</sequence>
<reference key="1">
    <citation type="journal article" date="2007" name="Nat. Biotechnol.">
        <title>Genome sequence of the lignocellulose-bioconverting and xylose-fermenting yeast Pichia stipitis.</title>
        <authorList>
            <person name="Jeffries T.W."/>
            <person name="Grigoriev I.V."/>
            <person name="Grimwood J."/>
            <person name="Laplaza J.M."/>
            <person name="Aerts A."/>
            <person name="Salamov A."/>
            <person name="Schmutz J."/>
            <person name="Lindquist E."/>
            <person name="Dehal P."/>
            <person name="Shapiro H."/>
            <person name="Jin Y.-S."/>
            <person name="Passoth V."/>
            <person name="Richardson P.M."/>
        </authorList>
    </citation>
    <scope>NUCLEOTIDE SEQUENCE [LARGE SCALE GENOMIC DNA]</scope>
    <source>
        <strain>ATCC 58785 / CBS 6054 / NBRC 10063 / NRRL Y-11545</strain>
    </source>
</reference>
<accession>A3LPS6</accession>
<protein>
    <recommendedName>
        <fullName evidence="1">Golgi to ER traffic protein 2</fullName>
    </recommendedName>
</protein>